<comment type="function">
    <text evidence="1">Binds directly to 16S ribosomal RNA.</text>
</comment>
<comment type="similarity">
    <text evidence="1">Belongs to the bacterial ribosomal protein bS20 family.</text>
</comment>
<accession>Q3Z5Y7</accession>
<dbReference type="EMBL" id="CP000038">
    <property type="protein sequence ID" value="AAZ86825.1"/>
    <property type="molecule type" value="Genomic_DNA"/>
</dbReference>
<dbReference type="RefSeq" id="WP_001274021.1">
    <property type="nucleotide sequence ID" value="NC_007384.1"/>
</dbReference>
<dbReference type="SMR" id="Q3Z5Y7"/>
<dbReference type="GeneID" id="93777413"/>
<dbReference type="KEGG" id="ssn:SSON_0028"/>
<dbReference type="HOGENOM" id="CLU_160655_4_0_6"/>
<dbReference type="Proteomes" id="UP000002529">
    <property type="component" value="Chromosome"/>
</dbReference>
<dbReference type="GO" id="GO:0005829">
    <property type="term" value="C:cytosol"/>
    <property type="evidence" value="ECO:0007669"/>
    <property type="project" value="TreeGrafter"/>
</dbReference>
<dbReference type="GO" id="GO:0015935">
    <property type="term" value="C:small ribosomal subunit"/>
    <property type="evidence" value="ECO:0007669"/>
    <property type="project" value="TreeGrafter"/>
</dbReference>
<dbReference type="GO" id="GO:0070181">
    <property type="term" value="F:small ribosomal subunit rRNA binding"/>
    <property type="evidence" value="ECO:0007669"/>
    <property type="project" value="TreeGrafter"/>
</dbReference>
<dbReference type="GO" id="GO:0003735">
    <property type="term" value="F:structural constituent of ribosome"/>
    <property type="evidence" value="ECO:0007669"/>
    <property type="project" value="InterPro"/>
</dbReference>
<dbReference type="GO" id="GO:0006412">
    <property type="term" value="P:translation"/>
    <property type="evidence" value="ECO:0007669"/>
    <property type="project" value="UniProtKB-UniRule"/>
</dbReference>
<dbReference type="FunFam" id="1.20.58.110:FF:000001">
    <property type="entry name" value="30S ribosomal protein S20"/>
    <property type="match status" value="1"/>
</dbReference>
<dbReference type="Gene3D" id="1.20.58.110">
    <property type="entry name" value="Ribosomal protein S20"/>
    <property type="match status" value="1"/>
</dbReference>
<dbReference type="HAMAP" id="MF_00500">
    <property type="entry name" value="Ribosomal_bS20"/>
    <property type="match status" value="1"/>
</dbReference>
<dbReference type="InterPro" id="IPR002583">
    <property type="entry name" value="Ribosomal_bS20"/>
</dbReference>
<dbReference type="InterPro" id="IPR036510">
    <property type="entry name" value="Ribosomal_bS20_sf"/>
</dbReference>
<dbReference type="NCBIfam" id="TIGR00029">
    <property type="entry name" value="S20"/>
    <property type="match status" value="1"/>
</dbReference>
<dbReference type="PANTHER" id="PTHR33398">
    <property type="entry name" value="30S RIBOSOMAL PROTEIN S20"/>
    <property type="match status" value="1"/>
</dbReference>
<dbReference type="PANTHER" id="PTHR33398:SF1">
    <property type="entry name" value="SMALL RIBOSOMAL SUBUNIT PROTEIN BS20C"/>
    <property type="match status" value="1"/>
</dbReference>
<dbReference type="Pfam" id="PF01649">
    <property type="entry name" value="Ribosomal_S20p"/>
    <property type="match status" value="1"/>
</dbReference>
<dbReference type="SUPFAM" id="SSF46992">
    <property type="entry name" value="Ribosomal protein S20"/>
    <property type="match status" value="1"/>
</dbReference>
<protein>
    <recommendedName>
        <fullName evidence="1">Small ribosomal subunit protein bS20</fullName>
    </recommendedName>
    <alternativeName>
        <fullName evidence="3">30S ribosomal protein S20</fullName>
    </alternativeName>
</protein>
<evidence type="ECO:0000255" key="1">
    <source>
        <dbReference type="HAMAP-Rule" id="MF_00500"/>
    </source>
</evidence>
<evidence type="ECO:0000256" key="2">
    <source>
        <dbReference type="SAM" id="MobiDB-lite"/>
    </source>
</evidence>
<evidence type="ECO:0000305" key="3"/>
<feature type="chain" id="PRO_0000224989" description="Small ribosomal subunit protein bS20">
    <location>
        <begin position="1"/>
        <end position="87"/>
    </location>
</feature>
<feature type="region of interest" description="Disordered" evidence="2">
    <location>
        <begin position="1"/>
        <end position="26"/>
    </location>
</feature>
<reference key="1">
    <citation type="journal article" date="2005" name="Nucleic Acids Res.">
        <title>Genome dynamics and diversity of Shigella species, the etiologic agents of bacillary dysentery.</title>
        <authorList>
            <person name="Yang F."/>
            <person name="Yang J."/>
            <person name="Zhang X."/>
            <person name="Chen L."/>
            <person name="Jiang Y."/>
            <person name="Yan Y."/>
            <person name="Tang X."/>
            <person name="Wang J."/>
            <person name="Xiong Z."/>
            <person name="Dong J."/>
            <person name="Xue Y."/>
            <person name="Zhu Y."/>
            <person name="Xu X."/>
            <person name="Sun L."/>
            <person name="Chen S."/>
            <person name="Nie H."/>
            <person name="Peng J."/>
            <person name="Xu J."/>
            <person name="Wang Y."/>
            <person name="Yuan Z."/>
            <person name="Wen Y."/>
            <person name="Yao Z."/>
            <person name="Shen Y."/>
            <person name="Qiang B."/>
            <person name="Hou Y."/>
            <person name="Yu J."/>
            <person name="Jin Q."/>
        </authorList>
    </citation>
    <scope>NUCLEOTIDE SEQUENCE [LARGE SCALE GENOMIC DNA]</scope>
    <source>
        <strain>Ss046</strain>
    </source>
</reference>
<sequence>MANIKSAKKRAIQSEKARKHNASRRSMMRTFIKKVYAAIEAGDKAAAQKAFNEMQPIVDRQAAKGLIHKNKAARHKANLTAQINKLA</sequence>
<keyword id="KW-1185">Reference proteome</keyword>
<keyword id="KW-0687">Ribonucleoprotein</keyword>
<keyword id="KW-0689">Ribosomal protein</keyword>
<keyword id="KW-0694">RNA-binding</keyword>
<keyword id="KW-0699">rRNA-binding</keyword>
<gene>
    <name evidence="1" type="primary">rpsT</name>
    <name type="ordered locus">SSON_0028</name>
</gene>
<organism>
    <name type="scientific">Shigella sonnei (strain Ss046)</name>
    <dbReference type="NCBI Taxonomy" id="300269"/>
    <lineage>
        <taxon>Bacteria</taxon>
        <taxon>Pseudomonadati</taxon>
        <taxon>Pseudomonadota</taxon>
        <taxon>Gammaproteobacteria</taxon>
        <taxon>Enterobacterales</taxon>
        <taxon>Enterobacteriaceae</taxon>
        <taxon>Shigella</taxon>
    </lineage>
</organism>
<proteinExistence type="inferred from homology"/>
<name>RS20_SHISS</name>